<protein>
    <recommendedName>
        <fullName evidence="1">Ribosomal RNA small subunit methyltransferase C</fullName>
        <ecNumber evidence="1">2.1.1.172</ecNumber>
    </recommendedName>
    <alternativeName>
        <fullName evidence="1">16S rRNA m2G1207 methyltransferase</fullName>
    </alternativeName>
    <alternativeName>
        <fullName evidence="1">rRNA (guanine-N(2)-)-methyltransferase RsmC</fullName>
    </alternativeName>
</protein>
<gene>
    <name evidence="1" type="primary">rsmC</name>
    <name type="ordered locus">ECH74115_5883</name>
</gene>
<sequence length="343" mass="37602">MSAFTPASEVLLRHSDDFEQSRILFAGDLQDDLPARLDTAASRAHTQQFQHWQVLSRQMGDNARFSLVATADDVADCDTLIYYWPKNKPEAQFQLMNLLSLLPVGTDIFVVGENRSGVRSAEQMLADYAPLNKVDSARRCGLYFGRLEKQPVFDADKFWGEYSVDGLTVKTLPGVFSRDGLDVGSQLLLSTLTPHTKGKVLDVGCGAGVLSVAFARHSPKIRLTLCDVSAPAVEASRATLAANGVEGEVFASNVFSEVKGRFDMIISNPPFHDGMQTSLDAAQTLIRGAVRHLNSGGELRIVANAFLPYPDVLDETFGFHEVIAQTGRFKVYRAIMTRQAKKG</sequence>
<dbReference type="EC" id="2.1.1.172" evidence="1"/>
<dbReference type="EMBL" id="CP001164">
    <property type="protein sequence ID" value="ACI36990.1"/>
    <property type="molecule type" value="Genomic_DNA"/>
</dbReference>
<dbReference type="RefSeq" id="WP_001272349.1">
    <property type="nucleotide sequence ID" value="NC_011353.1"/>
</dbReference>
<dbReference type="SMR" id="B5Z4Q2"/>
<dbReference type="KEGG" id="ecf:ECH74115_5883"/>
<dbReference type="HOGENOM" id="CLU_049581_0_1_6"/>
<dbReference type="GO" id="GO:0005737">
    <property type="term" value="C:cytoplasm"/>
    <property type="evidence" value="ECO:0007669"/>
    <property type="project" value="UniProtKB-SubCell"/>
</dbReference>
<dbReference type="GO" id="GO:0052914">
    <property type="term" value="F:16S rRNA (guanine(1207)-N(2))-methyltransferase activity"/>
    <property type="evidence" value="ECO:0007669"/>
    <property type="project" value="UniProtKB-EC"/>
</dbReference>
<dbReference type="GO" id="GO:0003676">
    <property type="term" value="F:nucleic acid binding"/>
    <property type="evidence" value="ECO:0007669"/>
    <property type="project" value="InterPro"/>
</dbReference>
<dbReference type="CDD" id="cd02440">
    <property type="entry name" value="AdoMet_MTases"/>
    <property type="match status" value="1"/>
</dbReference>
<dbReference type="FunFam" id="3.40.50.150:FF:000058">
    <property type="entry name" value="Ribosomal RNA small subunit methyltransferase C"/>
    <property type="match status" value="1"/>
</dbReference>
<dbReference type="FunFam" id="3.40.50.150:FF:000063">
    <property type="entry name" value="Ribosomal RNA small subunit methyltransferase C"/>
    <property type="match status" value="1"/>
</dbReference>
<dbReference type="Gene3D" id="3.40.50.150">
    <property type="entry name" value="Vaccinia Virus protein VP39"/>
    <property type="match status" value="2"/>
</dbReference>
<dbReference type="HAMAP" id="MF_01862">
    <property type="entry name" value="16SrRNA_methyltr_C"/>
    <property type="match status" value="1"/>
</dbReference>
<dbReference type="InterPro" id="IPR002052">
    <property type="entry name" value="DNA_methylase_N6_adenine_CS"/>
</dbReference>
<dbReference type="InterPro" id="IPR013675">
    <property type="entry name" value="Mtase_sm_N"/>
</dbReference>
<dbReference type="InterPro" id="IPR023543">
    <property type="entry name" value="rRNA_ssu_MeTfrase_C"/>
</dbReference>
<dbReference type="InterPro" id="IPR046977">
    <property type="entry name" value="RsmC/RlmG"/>
</dbReference>
<dbReference type="InterPro" id="IPR029063">
    <property type="entry name" value="SAM-dependent_MTases_sf"/>
</dbReference>
<dbReference type="InterPro" id="IPR007848">
    <property type="entry name" value="Small_mtfrase_dom"/>
</dbReference>
<dbReference type="NCBIfam" id="NF007023">
    <property type="entry name" value="PRK09489.1"/>
    <property type="match status" value="1"/>
</dbReference>
<dbReference type="PANTHER" id="PTHR47816">
    <property type="entry name" value="RIBOSOMAL RNA SMALL SUBUNIT METHYLTRANSFERASE C"/>
    <property type="match status" value="1"/>
</dbReference>
<dbReference type="PANTHER" id="PTHR47816:SF4">
    <property type="entry name" value="RIBOSOMAL RNA SMALL SUBUNIT METHYLTRANSFERASE C"/>
    <property type="match status" value="1"/>
</dbReference>
<dbReference type="Pfam" id="PF05175">
    <property type="entry name" value="MTS"/>
    <property type="match status" value="1"/>
</dbReference>
<dbReference type="Pfam" id="PF08468">
    <property type="entry name" value="MTS_N"/>
    <property type="match status" value="1"/>
</dbReference>
<dbReference type="SUPFAM" id="SSF53335">
    <property type="entry name" value="S-adenosyl-L-methionine-dependent methyltransferases"/>
    <property type="match status" value="1"/>
</dbReference>
<reference key="1">
    <citation type="journal article" date="2011" name="Proc. Natl. Acad. Sci. U.S.A.">
        <title>Genomic anatomy of Escherichia coli O157:H7 outbreaks.</title>
        <authorList>
            <person name="Eppinger M."/>
            <person name="Mammel M.K."/>
            <person name="Leclerc J.E."/>
            <person name="Ravel J."/>
            <person name="Cebula T.A."/>
        </authorList>
    </citation>
    <scope>NUCLEOTIDE SEQUENCE [LARGE SCALE GENOMIC DNA]</scope>
    <source>
        <strain>EC4115 / EHEC</strain>
    </source>
</reference>
<feature type="chain" id="PRO_0000369706" description="Ribosomal RNA small subunit methyltransferase C">
    <location>
        <begin position="1"/>
        <end position="343"/>
    </location>
</feature>
<proteinExistence type="inferred from homology"/>
<keyword id="KW-0963">Cytoplasm</keyword>
<keyword id="KW-0489">Methyltransferase</keyword>
<keyword id="KW-0698">rRNA processing</keyword>
<keyword id="KW-0949">S-adenosyl-L-methionine</keyword>
<keyword id="KW-0808">Transferase</keyword>
<accession>B5Z4Q2</accession>
<name>RSMC_ECO5E</name>
<comment type="function">
    <text evidence="1">Specifically methylates the guanine in position 1207 of 16S rRNA in the 30S particle.</text>
</comment>
<comment type="catalytic activity">
    <reaction evidence="1">
        <text>guanosine(1207) in 16S rRNA + S-adenosyl-L-methionine = N(2)-methylguanosine(1207) in 16S rRNA + S-adenosyl-L-homocysteine + H(+)</text>
        <dbReference type="Rhea" id="RHEA:42736"/>
        <dbReference type="Rhea" id="RHEA-COMP:10213"/>
        <dbReference type="Rhea" id="RHEA-COMP:10214"/>
        <dbReference type="ChEBI" id="CHEBI:15378"/>
        <dbReference type="ChEBI" id="CHEBI:57856"/>
        <dbReference type="ChEBI" id="CHEBI:59789"/>
        <dbReference type="ChEBI" id="CHEBI:74269"/>
        <dbReference type="ChEBI" id="CHEBI:74481"/>
        <dbReference type="EC" id="2.1.1.172"/>
    </reaction>
</comment>
<comment type="subunit">
    <text evidence="1">Monomer.</text>
</comment>
<comment type="subcellular location">
    <subcellularLocation>
        <location evidence="1">Cytoplasm</location>
    </subcellularLocation>
</comment>
<comment type="similarity">
    <text evidence="1">Belongs to the methyltransferase superfamily. RsmC family.</text>
</comment>
<organism>
    <name type="scientific">Escherichia coli O157:H7 (strain EC4115 / EHEC)</name>
    <dbReference type="NCBI Taxonomy" id="444450"/>
    <lineage>
        <taxon>Bacteria</taxon>
        <taxon>Pseudomonadati</taxon>
        <taxon>Pseudomonadota</taxon>
        <taxon>Gammaproteobacteria</taxon>
        <taxon>Enterobacterales</taxon>
        <taxon>Enterobacteriaceae</taxon>
        <taxon>Escherichia</taxon>
    </lineage>
</organism>
<evidence type="ECO:0000255" key="1">
    <source>
        <dbReference type="HAMAP-Rule" id="MF_01862"/>
    </source>
</evidence>